<dbReference type="EMBL" id="X57964">
    <property type="protein sequence ID" value="CAA41032.1"/>
    <property type="molecule type" value="Genomic_DNA"/>
</dbReference>
<dbReference type="PIR" id="S78225">
    <property type="entry name" value="S78225"/>
</dbReference>
<dbReference type="Proteomes" id="UP000186698">
    <property type="component" value="Unplaced"/>
</dbReference>
<name>HS30E_XENLA</name>
<proteinExistence type="inferred from homology"/>
<comment type="similarity">
    <text evidence="1">Belongs to the small heat shock protein (HSP20) family.</text>
</comment>
<evidence type="ECO:0000255" key="1">
    <source>
        <dbReference type="PROSITE-ProRule" id="PRU00285"/>
    </source>
</evidence>
<evidence type="ECO:0000256" key="2">
    <source>
        <dbReference type="SAM" id="MobiDB-lite"/>
    </source>
</evidence>
<organism>
    <name type="scientific">Xenopus laevis</name>
    <name type="common">African clawed frog</name>
    <dbReference type="NCBI Taxonomy" id="8355"/>
    <lineage>
        <taxon>Eukaryota</taxon>
        <taxon>Metazoa</taxon>
        <taxon>Chordata</taxon>
        <taxon>Craniata</taxon>
        <taxon>Vertebrata</taxon>
        <taxon>Euteleostomi</taxon>
        <taxon>Amphibia</taxon>
        <taxon>Batrachia</taxon>
        <taxon>Anura</taxon>
        <taxon>Pipoidea</taxon>
        <taxon>Pipidae</taxon>
        <taxon>Xenopodinae</taxon>
        <taxon>Xenopus</taxon>
        <taxon>Xenopus</taxon>
    </lineage>
</organism>
<accession>P30220</accession>
<keyword id="KW-1185">Reference proteome</keyword>
<keyword id="KW-0346">Stress response</keyword>
<feature type="chain" id="PRO_0000125956" description="Heat shock protein 30E">
    <location>
        <begin position="1"/>
        <end position="91" status="greater than"/>
    </location>
</feature>
<feature type="region of interest" description="Disordered" evidence="2">
    <location>
        <begin position="62"/>
        <end position="91"/>
    </location>
</feature>
<feature type="compositionally biased region" description="Basic and acidic residues" evidence="2">
    <location>
        <begin position="82"/>
        <end position="91"/>
    </location>
</feature>
<feature type="non-terminal residue">
    <location>
        <position position="91"/>
    </location>
</feature>
<protein>
    <recommendedName>
        <fullName>Heat shock protein 30E</fullName>
    </recommendedName>
</protein>
<gene>
    <name type="primary">hsp30e</name>
</gene>
<reference key="1">
    <citation type="journal article" date="1992" name="Gene">
        <title>Comparison of regulatory and structural regions of the Xenopus laevis small heat-shock protein-encoding gene family.</title>
        <authorList>
            <person name="Krone P.H."/>
            <person name="Snow A."/>
            <person name="Ali A."/>
            <person name="Pasternak J.J."/>
            <person name="Heikkila J.J."/>
        </authorList>
    </citation>
    <scope>NUCLEOTIDE SEQUENCE [GENOMIC DNA]</scope>
</reference>
<sequence>MFPLSLLQPSHSPLCPCSQPALTLFGQLEDKNLGDNDLERRMQSVNEVCQLLFQDMDISRIRDQIRQPGAPESEGTSPNTGKDGKDPGNSL</sequence>